<dbReference type="EMBL" id="AL445563">
    <property type="protein sequence ID" value="CAC13288.1"/>
    <property type="molecule type" value="Genomic_DNA"/>
</dbReference>
<dbReference type="PIR" id="C90526">
    <property type="entry name" value="C90526"/>
</dbReference>
<dbReference type="RefSeq" id="WP_010924919.1">
    <property type="nucleotide sequence ID" value="NC_002771.1"/>
</dbReference>
<dbReference type="SMR" id="Q98R95"/>
<dbReference type="STRING" id="272635.gene:17576696"/>
<dbReference type="KEGG" id="mpu:MYPU_1150"/>
<dbReference type="eggNOG" id="COG1354">
    <property type="taxonomic scope" value="Bacteria"/>
</dbReference>
<dbReference type="HOGENOM" id="CLU_038686_3_1_14"/>
<dbReference type="BioCyc" id="MPUL272635:G1GT6-114-MONOMER"/>
<dbReference type="Proteomes" id="UP000000528">
    <property type="component" value="Chromosome"/>
</dbReference>
<dbReference type="GO" id="GO:0005737">
    <property type="term" value="C:cytoplasm"/>
    <property type="evidence" value="ECO:0007669"/>
    <property type="project" value="UniProtKB-SubCell"/>
</dbReference>
<dbReference type="GO" id="GO:0051301">
    <property type="term" value="P:cell division"/>
    <property type="evidence" value="ECO:0007669"/>
    <property type="project" value="UniProtKB-KW"/>
</dbReference>
<dbReference type="GO" id="GO:0007059">
    <property type="term" value="P:chromosome segregation"/>
    <property type="evidence" value="ECO:0007669"/>
    <property type="project" value="UniProtKB-UniRule"/>
</dbReference>
<dbReference type="GO" id="GO:0006260">
    <property type="term" value="P:DNA replication"/>
    <property type="evidence" value="ECO:0007669"/>
    <property type="project" value="UniProtKB-UniRule"/>
</dbReference>
<dbReference type="Gene3D" id="6.10.250.2410">
    <property type="match status" value="1"/>
</dbReference>
<dbReference type="Gene3D" id="1.10.10.580">
    <property type="entry name" value="Structural maintenance of chromosome 1. Chain E"/>
    <property type="match status" value="1"/>
</dbReference>
<dbReference type="HAMAP" id="MF_01805">
    <property type="entry name" value="ScpA"/>
    <property type="match status" value="1"/>
</dbReference>
<dbReference type="InterPro" id="IPR003768">
    <property type="entry name" value="ScpA"/>
</dbReference>
<dbReference type="InterPro" id="IPR023093">
    <property type="entry name" value="ScpA-like_C"/>
</dbReference>
<dbReference type="NCBIfam" id="NF000994">
    <property type="entry name" value="PRK00104.1-3"/>
    <property type="match status" value="1"/>
</dbReference>
<dbReference type="PANTHER" id="PTHR33969">
    <property type="entry name" value="SEGREGATION AND CONDENSATION PROTEIN A"/>
    <property type="match status" value="1"/>
</dbReference>
<dbReference type="PANTHER" id="PTHR33969:SF2">
    <property type="entry name" value="SEGREGATION AND CONDENSATION PROTEIN A"/>
    <property type="match status" value="1"/>
</dbReference>
<dbReference type="Pfam" id="PF02616">
    <property type="entry name" value="SMC_ScpA"/>
    <property type="match status" value="1"/>
</dbReference>
<name>SCPA_MYCPU</name>
<keyword id="KW-0131">Cell cycle</keyword>
<keyword id="KW-0132">Cell division</keyword>
<keyword id="KW-0159">Chromosome partition</keyword>
<keyword id="KW-0963">Cytoplasm</keyword>
<keyword id="KW-1185">Reference proteome</keyword>
<accession>Q98R95</accession>
<protein>
    <recommendedName>
        <fullName evidence="1">Segregation and condensation protein A</fullName>
    </recommendedName>
</protein>
<reference key="1">
    <citation type="journal article" date="2001" name="Nucleic Acids Res.">
        <title>The complete genome sequence of the murine respiratory pathogen Mycoplasma pulmonis.</title>
        <authorList>
            <person name="Chambaud I."/>
            <person name="Heilig R."/>
            <person name="Ferris S."/>
            <person name="Barbe V."/>
            <person name="Samson D."/>
            <person name="Galisson F."/>
            <person name="Moszer I."/>
            <person name="Dybvig K."/>
            <person name="Wroblewski H."/>
            <person name="Viari A."/>
            <person name="Rocha E.P.C."/>
            <person name="Blanchard A."/>
        </authorList>
    </citation>
    <scope>NUCLEOTIDE SEQUENCE [LARGE SCALE GENOMIC DNA]</scope>
    <source>
        <strain>UAB CTIP</strain>
    </source>
</reference>
<sequence length="249" mass="29184">MQTSLHENGPVFNIKNFSGPLDLLLSLVKDKNIDIFEINLVELATQYLEIIKKLQDDKIDLASDYLVMAATLLQIKASMALQGEKVDEEVELDKERLLMKLAEYKQFKEISQILRYQEEKRKEIFLKKSSPAEEFIRPIDEKILDGRSSMVQLVLTLRQMFERTFAEKLRRTKIDNFNLTPSDQVLYIKKLFNENEIVTFEMIFSLPSLSHFVITLIALLDLSRRQELLIYQDQQFGTIRIEKGPNYEE</sequence>
<comment type="function">
    <text evidence="1">Participates in chromosomal partition during cell division. May act via the formation of a condensin-like complex containing Smc and ScpB that pull DNA away from mid-cell into both cell halves.</text>
</comment>
<comment type="subunit">
    <text evidence="1">Component of a cohesin-like complex composed of ScpA, ScpB and the Smc homodimer, in which ScpA and ScpB bind to the head domain of Smc. The presence of the three proteins is required for the association of the complex with DNA.</text>
</comment>
<comment type="subcellular location">
    <subcellularLocation>
        <location evidence="1">Cytoplasm</location>
    </subcellularLocation>
    <text evidence="1">Associated with two foci at the outer edges of the nucleoid region in young cells, and at four foci within both cell halves in older cells.</text>
</comment>
<comment type="similarity">
    <text evidence="1">Belongs to the ScpA family.</text>
</comment>
<gene>
    <name evidence="1" type="primary">scpA</name>
    <name type="ordered locus">MYPU_1150</name>
</gene>
<feature type="chain" id="PRO_0000211098" description="Segregation and condensation protein A">
    <location>
        <begin position="1"/>
        <end position="249"/>
    </location>
</feature>
<evidence type="ECO:0000255" key="1">
    <source>
        <dbReference type="HAMAP-Rule" id="MF_01805"/>
    </source>
</evidence>
<proteinExistence type="inferred from homology"/>
<organism>
    <name type="scientific">Mycoplasmopsis pulmonis (strain UAB CTIP)</name>
    <name type="common">Mycoplasma pulmonis</name>
    <dbReference type="NCBI Taxonomy" id="272635"/>
    <lineage>
        <taxon>Bacteria</taxon>
        <taxon>Bacillati</taxon>
        <taxon>Mycoplasmatota</taxon>
        <taxon>Mycoplasmoidales</taxon>
        <taxon>Metamycoplasmataceae</taxon>
        <taxon>Mycoplasmopsis</taxon>
    </lineage>
</organism>